<organism>
    <name type="scientific">Bacillus anthracis</name>
    <dbReference type="NCBI Taxonomy" id="1392"/>
    <lineage>
        <taxon>Bacteria</taxon>
        <taxon>Bacillati</taxon>
        <taxon>Bacillota</taxon>
        <taxon>Bacilli</taxon>
        <taxon>Bacillales</taxon>
        <taxon>Bacillaceae</taxon>
        <taxon>Bacillus</taxon>
        <taxon>Bacillus cereus group</taxon>
    </lineage>
</organism>
<sequence>MAQIRIHEVNTRIENEVKVSKFLQEEGVLYEKWNISKLPPHLNENYSLTDENKAEILAVFSKEIADVSARRGYKAHDVISLSNSTPNLDELLINFQKEHHHTDDEVRFIVSGHGIFAIEGKDGTFFDVELEPGDLISVPENARHYFTLQDDRQVVAIRIFVTTEGWVPIY</sequence>
<keyword id="KW-0002">3D-structure</keyword>
<keyword id="KW-0028">Amino-acid biosynthesis</keyword>
<keyword id="KW-0223">Dioxygenase</keyword>
<keyword id="KW-0408">Iron</keyword>
<keyword id="KW-0479">Metal-binding</keyword>
<keyword id="KW-0486">Methionine biosynthesis</keyword>
<keyword id="KW-0533">Nickel</keyword>
<keyword id="KW-0560">Oxidoreductase</keyword>
<keyword id="KW-1185">Reference proteome</keyword>
<gene>
    <name evidence="1" type="primary">mtnD</name>
    <name type="ordered locus">BA_4258</name>
    <name type="ordered locus">GBAA_4258</name>
    <name type="ordered locus">BAS3949</name>
</gene>
<protein>
    <recommendedName>
        <fullName evidence="1">Acireductone dioxygenase</fullName>
    </recommendedName>
    <alternativeName>
        <fullName evidence="1">1,2-dihydroxy-3-keto-5-methylthiopentene dioxygenase</fullName>
        <shortName evidence="1">DHK-MTPene dioxygenase</shortName>
    </alternativeName>
    <alternativeName>
        <fullName evidence="1">Acireductone dioxygenase (Fe(2+)-requiring)</fullName>
        <shortName evidence="1">ARD'</shortName>
        <shortName evidence="1">Fe-ARD</shortName>
        <ecNumber evidence="1">1.13.11.54</ecNumber>
    </alternativeName>
    <alternativeName>
        <fullName evidence="1">Acireductone dioxygenase (Ni(2+)-requiring)</fullName>
        <shortName evidence="1">ARD</shortName>
        <shortName evidence="1">Ni-ARD</shortName>
        <ecNumber evidence="1">1.13.11.53</ecNumber>
    </alternativeName>
</protein>
<reference key="1">
    <citation type="journal article" date="2003" name="Nature">
        <title>The genome sequence of Bacillus anthracis Ames and comparison to closely related bacteria.</title>
        <authorList>
            <person name="Read T.D."/>
            <person name="Peterson S.N."/>
            <person name="Tourasse N.J."/>
            <person name="Baillie L.W."/>
            <person name="Paulsen I.T."/>
            <person name="Nelson K.E."/>
            <person name="Tettelin H."/>
            <person name="Fouts D.E."/>
            <person name="Eisen J.A."/>
            <person name="Gill S.R."/>
            <person name="Holtzapple E.K."/>
            <person name="Okstad O.A."/>
            <person name="Helgason E."/>
            <person name="Rilstone J."/>
            <person name="Wu M."/>
            <person name="Kolonay J.F."/>
            <person name="Beanan M.J."/>
            <person name="Dodson R.J."/>
            <person name="Brinkac L.M."/>
            <person name="Gwinn M.L."/>
            <person name="DeBoy R.T."/>
            <person name="Madpu R."/>
            <person name="Daugherty S.C."/>
            <person name="Durkin A.S."/>
            <person name="Haft D.H."/>
            <person name="Nelson W.C."/>
            <person name="Peterson J.D."/>
            <person name="Pop M."/>
            <person name="Khouri H.M."/>
            <person name="Radune D."/>
            <person name="Benton J.L."/>
            <person name="Mahamoud Y."/>
            <person name="Jiang L."/>
            <person name="Hance I.R."/>
            <person name="Weidman J.F."/>
            <person name="Berry K.J."/>
            <person name="Plaut R.D."/>
            <person name="Wolf A.M."/>
            <person name="Watkins K.L."/>
            <person name="Nierman W.C."/>
            <person name="Hazen A."/>
            <person name="Cline R.T."/>
            <person name="Redmond C."/>
            <person name="Thwaite J.E."/>
            <person name="White O."/>
            <person name="Salzberg S.L."/>
            <person name="Thomason B."/>
            <person name="Friedlander A.M."/>
            <person name="Koehler T.M."/>
            <person name="Hanna P.C."/>
            <person name="Kolstoe A.-B."/>
            <person name="Fraser C.M."/>
        </authorList>
    </citation>
    <scope>NUCLEOTIDE SEQUENCE [LARGE SCALE GENOMIC DNA]</scope>
    <source>
        <strain>Ames / isolate Porton</strain>
    </source>
</reference>
<reference key="2">
    <citation type="journal article" date="2009" name="J. Bacteriol.">
        <title>The complete genome sequence of Bacillus anthracis Ames 'Ancestor'.</title>
        <authorList>
            <person name="Ravel J."/>
            <person name="Jiang L."/>
            <person name="Stanley S.T."/>
            <person name="Wilson M.R."/>
            <person name="Decker R.S."/>
            <person name="Read T.D."/>
            <person name="Worsham P."/>
            <person name="Keim P.S."/>
            <person name="Salzberg S.L."/>
            <person name="Fraser-Liggett C.M."/>
            <person name="Rasko D.A."/>
        </authorList>
    </citation>
    <scope>NUCLEOTIDE SEQUENCE [LARGE SCALE GENOMIC DNA]</scope>
    <source>
        <strain>Ames ancestor</strain>
    </source>
</reference>
<reference key="3">
    <citation type="submission" date="2004-01" db="EMBL/GenBank/DDBJ databases">
        <title>Complete genome sequence of Bacillus anthracis Sterne.</title>
        <authorList>
            <person name="Brettin T.S."/>
            <person name="Bruce D."/>
            <person name="Challacombe J.F."/>
            <person name="Gilna P."/>
            <person name="Han C."/>
            <person name="Hill K."/>
            <person name="Hitchcock P."/>
            <person name="Jackson P."/>
            <person name="Keim P."/>
            <person name="Longmire J."/>
            <person name="Lucas S."/>
            <person name="Okinaka R."/>
            <person name="Richardson P."/>
            <person name="Rubin E."/>
            <person name="Tice H."/>
        </authorList>
    </citation>
    <scope>NUCLEOTIDE SEQUENCE [LARGE SCALE GENOMIC DNA]</scope>
    <source>
        <strain>Sterne</strain>
    </source>
</reference>
<accession>Q81MI9</accession>
<accession>Q6HTY9</accession>
<accession>Q6KN69</accession>
<proteinExistence type="evidence at protein level"/>
<name>MTND_BACAN</name>
<comment type="function">
    <text evidence="1">Catalyzes 2 different reactions between oxygen and the acireductone 1,2-dihydroxy-3-keto-5-methylthiopentene (DHK-MTPene) depending upon the metal bound in the active site. Fe-containing acireductone dioxygenase (Fe-ARD) produces formate and 2-keto-4-methylthiobutyrate (KMTB), the alpha-ketoacid precursor of methionine in the methionine recycle pathway. Ni-containing acireductone dioxygenase (Ni-ARD) produces methylthiopropionate, carbon monoxide and formate, and does not lie on the methionine recycle pathway.</text>
</comment>
<comment type="catalytic activity">
    <reaction evidence="1">
        <text>1,2-dihydroxy-5-(methylsulfanyl)pent-1-en-3-one + O2 = 3-(methylsulfanyl)propanoate + CO + formate + 2 H(+)</text>
        <dbReference type="Rhea" id="RHEA:14161"/>
        <dbReference type="ChEBI" id="CHEBI:15378"/>
        <dbReference type="ChEBI" id="CHEBI:15379"/>
        <dbReference type="ChEBI" id="CHEBI:15740"/>
        <dbReference type="ChEBI" id="CHEBI:17245"/>
        <dbReference type="ChEBI" id="CHEBI:49016"/>
        <dbReference type="ChEBI" id="CHEBI:49252"/>
        <dbReference type="EC" id="1.13.11.53"/>
    </reaction>
</comment>
<comment type="catalytic activity">
    <reaction evidence="1">
        <text>1,2-dihydroxy-5-(methylsulfanyl)pent-1-en-3-one + O2 = 4-methylsulfanyl-2-oxobutanoate + formate + 2 H(+)</text>
        <dbReference type="Rhea" id="RHEA:24504"/>
        <dbReference type="ChEBI" id="CHEBI:15378"/>
        <dbReference type="ChEBI" id="CHEBI:15379"/>
        <dbReference type="ChEBI" id="CHEBI:15740"/>
        <dbReference type="ChEBI" id="CHEBI:16723"/>
        <dbReference type="ChEBI" id="CHEBI:49252"/>
        <dbReference type="EC" id="1.13.11.54"/>
    </reaction>
</comment>
<comment type="cofactor">
    <cofactor evidence="1">
        <name>Fe(2+)</name>
        <dbReference type="ChEBI" id="CHEBI:29033"/>
    </cofactor>
    <text evidence="1">Binds 1 Fe(2+) cation per monomer.</text>
</comment>
<comment type="cofactor">
    <cofactor evidence="1">
        <name>Ni(2+)</name>
        <dbReference type="ChEBI" id="CHEBI:49786"/>
    </cofactor>
    <text evidence="1">Binds 1 nickel ion per monomer.</text>
</comment>
<comment type="pathway">
    <text evidence="1">Amino-acid biosynthesis; L-methionine biosynthesis via salvage pathway; L-methionine from S-methyl-5-thio-alpha-D-ribose 1-phosphate: step 5/6.</text>
</comment>
<comment type="subunit">
    <text evidence="1">Monomer.</text>
</comment>
<comment type="similarity">
    <text evidence="1">Belongs to the acireductone dioxygenase (ARD) family.</text>
</comment>
<feature type="chain" id="PRO_0000162939" description="Acireductone dioxygenase">
    <location>
        <begin position="1"/>
        <end position="170"/>
    </location>
</feature>
<feature type="binding site" evidence="1">
    <location>
        <position position="99"/>
    </location>
    <ligand>
        <name>Fe(2+)</name>
        <dbReference type="ChEBI" id="CHEBI:29033"/>
    </ligand>
</feature>
<feature type="binding site" evidence="1">
    <location>
        <position position="99"/>
    </location>
    <ligand>
        <name>Ni(2+)</name>
        <dbReference type="ChEBI" id="CHEBI:49786"/>
    </ligand>
</feature>
<feature type="binding site" evidence="1">
    <location>
        <position position="101"/>
    </location>
    <ligand>
        <name>Fe(2+)</name>
        <dbReference type="ChEBI" id="CHEBI:29033"/>
    </ligand>
</feature>
<feature type="binding site" evidence="1">
    <location>
        <position position="101"/>
    </location>
    <ligand>
        <name>Ni(2+)</name>
        <dbReference type="ChEBI" id="CHEBI:49786"/>
    </ligand>
</feature>
<feature type="binding site" evidence="1">
    <location>
        <position position="105"/>
    </location>
    <ligand>
        <name>Fe(2+)</name>
        <dbReference type="ChEBI" id="CHEBI:29033"/>
    </ligand>
</feature>
<feature type="binding site" evidence="1">
    <location>
        <position position="105"/>
    </location>
    <ligand>
        <name>Ni(2+)</name>
        <dbReference type="ChEBI" id="CHEBI:49786"/>
    </ligand>
</feature>
<feature type="binding site" evidence="1">
    <location>
        <position position="144"/>
    </location>
    <ligand>
        <name>Fe(2+)</name>
        <dbReference type="ChEBI" id="CHEBI:29033"/>
    </ligand>
</feature>
<feature type="binding site" evidence="1">
    <location>
        <position position="144"/>
    </location>
    <ligand>
        <name>Ni(2+)</name>
        <dbReference type="ChEBI" id="CHEBI:49786"/>
    </ligand>
</feature>
<feature type="site" description="May play a role in metal incorporation in vivo" evidence="1">
    <location>
        <position position="98"/>
    </location>
</feature>
<feature type="site" description="May play a role in transmitting local conformational changes" evidence="1">
    <location>
        <position position="104"/>
    </location>
</feature>
<feature type="site" description="Important to generate the dianion" evidence="1">
    <location>
        <position position="107"/>
    </location>
</feature>
<feature type="strand" evidence="2">
    <location>
        <begin position="3"/>
        <end position="6"/>
    </location>
</feature>
<feature type="turn" evidence="2">
    <location>
        <begin position="7"/>
        <end position="9"/>
    </location>
</feature>
<feature type="strand" evidence="3">
    <location>
        <begin position="11"/>
        <end position="13"/>
    </location>
</feature>
<feature type="helix" evidence="2">
    <location>
        <begin position="16"/>
        <end position="25"/>
    </location>
</feature>
<feature type="strand" evidence="2">
    <location>
        <begin position="29"/>
        <end position="32"/>
    </location>
</feature>
<feature type="helix" evidence="2">
    <location>
        <begin position="35"/>
        <end position="37"/>
    </location>
</feature>
<feature type="helix" evidence="2">
    <location>
        <begin position="40"/>
        <end position="42"/>
    </location>
</feature>
<feature type="helix" evidence="2">
    <location>
        <begin position="50"/>
        <end position="59"/>
    </location>
</feature>
<feature type="helix" evidence="2">
    <location>
        <begin position="61"/>
        <end position="71"/>
    </location>
</feature>
<feature type="strand" evidence="2">
    <location>
        <begin position="75"/>
        <end position="81"/>
    </location>
</feature>
<feature type="helix" evidence="2">
    <location>
        <begin position="88"/>
        <end position="92"/>
    </location>
</feature>
<feature type="turn" evidence="2">
    <location>
        <begin position="93"/>
        <end position="95"/>
    </location>
</feature>
<feature type="strand" evidence="2">
    <location>
        <begin position="105"/>
        <end position="112"/>
    </location>
</feature>
<feature type="strand" evidence="2">
    <location>
        <begin position="114"/>
        <end position="119"/>
    </location>
</feature>
<feature type="strand" evidence="3">
    <location>
        <begin position="121"/>
        <end position="123"/>
    </location>
</feature>
<feature type="strand" evidence="2">
    <location>
        <begin position="125"/>
        <end position="130"/>
    </location>
</feature>
<feature type="strand" evidence="2">
    <location>
        <begin position="134"/>
        <end position="138"/>
    </location>
</feature>
<feature type="strand" evidence="2">
    <location>
        <begin position="144"/>
        <end position="147"/>
    </location>
</feature>
<feature type="strand" evidence="2">
    <location>
        <begin position="154"/>
        <end position="161"/>
    </location>
</feature>
<feature type="helix" evidence="2">
    <location>
        <begin position="163"/>
        <end position="166"/>
    </location>
</feature>
<dbReference type="EC" id="1.13.11.54" evidence="1"/>
<dbReference type="EC" id="1.13.11.53" evidence="1"/>
<dbReference type="EMBL" id="AE016879">
    <property type="protein sequence ID" value="AAP27979.1"/>
    <property type="molecule type" value="Genomic_DNA"/>
</dbReference>
<dbReference type="EMBL" id="AE017334">
    <property type="protein sequence ID" value="AAT33375.1"/>
    <property type="molecule type" value="Genomic_DNA"/>
</dbReference>
<dbReference type="EMBL" id="AE017225">
    <property type="protein sequence ID" value="AAT56250.1"/>
    <property type="molecule type" value="Genomic_DNA"/>
</dbReference>
<dbReference type="RefSeq" id="NP_846493.1">
    <property type="nucleotide sequence ID" value="NC_003997.3"/>
</dbReference>
<dbReference type="RefSeq" id="WP_000057328.1">
    <property type="nucleotide sequence ID" value="NZ_WXXJ01000027.1"/>
</dbReference>
<dbReference type="RefSeq" id="YP_030199.1">
    <property type="nucleotide sequence ID" value="NC_005945.1"/>
</dbReference>
<dbReference type="PDB" id="4QGL">
    <property type="method" value="X-ray"/>
    <property type="resolution" value="2.61 A"/>
    <property type="chains" value="A=1-170"/>
</dbReference>
<dbReference type="PDB" id="4QGM">
    <property type="method" value="X-ray"/>
    <property type="resolution" value="2.97 A"/>
    <property type="chains" value="A=1-170"/>
</dbReference>
<dbReference type="PDBsum" id="4QGL"/>
<dbReference type="PDBsum" id="4QGM"/>
<dbReference type="SMR" id="Q81MI9"/>
<dbReference type="IntAct" id="Q81MI9">
    <property type="interactions" value="1"/>
</dbReference>
<dbReference type="STRING" id="261594.GBAA_4258"/>
<dbReference type="DNASU" id="1088831"/>
<dbReference type="GeneID" id="45023929"/>
<dbReference type="KEGG" id="ban:BA_4258"/>
<dbReference type="KEGG" id="banh:HYU01_20805"/>
<dbReference type="KEGG" id="bar:GBAA_4258"/>
<dbReference type="KEGG" id="bat:BAS3949"/>
<dbReference type="PATRIC" id="fig|198094.11.peg.4228"/>
<dbReference type="eggNOG" id="COG1791">
    <property type="taxonomic scope" value="Bacteria"/>
</dbReference>
<dbReference type="HOGENOM" id="CLU_125400_0_0_9"/>
<dbReference type="OMA" id="TTHWFDM"/>
<dbReference type="OrthoDB" id="9795636at2"/>
<dbReference type="UniPathway" id="UPA00904">
    <property type="reaction ID" value="UER00878"/>
</dbReference>
<dbReference type="EvolutionaryTrace" id="Q81MI9"/>
<dbReference type="Proteomes" id="UP000000427">
    <property type="component" value="Chromosome"/>
</dbReference>
<dbReference type="Proteomes" id="UP000000594">
    <property type="component" value="Chromosome"/>
</dbReference>
<dbReference type="GO" id="GO:0010308">
    <property type="term" value="F:acireductone dioxygenase (Ni2+-requiring) activity"/>
    <property type="evidence" value="ECO:0007669"/>
    <property type="project" value="UniProtKB-UniRule"/>
</dbReference>
<dbReference type="GO" id="GO:0010309">
    <property type="term" value="F:acireductone dioxygenase [iron(II)-requiring] activity"/>
    <property type="evidence" value="ECO:0007669"/>
    <property type="project" value="UniProtKB-UniRule"/>
</dbReference>
<dbReference type="GO" id="GO:0005506">
    <property type="term" value="F:iron ion binding"/>
    <property type="evidence" value="ECO:0007669"/>
    <property type="project" value="UniProtKB-UniRule"/>
</dbReference>
<dbReference type="GO" id="GO:0016151">
    <property type="term" value="F:nickel cation binding"/>
    <property type="evidence" value="ECO:0007669"/>
    <property type="project" value="UniProtKB-UniRule"/>
</dbReference>
<dbReference type="GO" id="GO:0019509">
    <property type="term" value="P:L-methionine salvage from methylthioadenosine"/>
    <property type="evidence" value="ECO:0007669"/>
    <property type="project" value="UniProtKB-UniRule"/>
</dbReference>
<dbReference type="GO" id="GO:0019284">
    <property type="term" value="P:L-methionine salvage from S-adenosylmethionine"/>
    <property type="evidence" value="ECO:0007669"/>
    <property type="project" value="InterPro"/>
</dbReference>
<dbReference type="CDD" id="cd02232">
    <property type="entry name" value="cupin_ARD"/>
    <property type="match status" value="1"/>
</dbReference>
<dbReference type="FunFam" id="2.60.120.10:FF:000056">
    <property type="entry name" value="Acireductone dioxygenase"/>
    <property type="match status" value="1"/>
</dbReference>
<dbReference type="Gene3D" id="2.60.120.10">
    <property type="entry name" value="Jelly Rolls"/>
    <property type="match status" value="1"/>
</dbReference>
<dbReference type="HAMAP" id="MF_01682">
    <property type="entry name" value="Salvage_MtnD"/>
    <property type="match status" value="1"/>
</dbReference>
<dbReference type="InterPro" id="IPR004313">
    <property type="entry name" value="ARD"/>
</dbReference>
<dbReference type="InterPro" id="IPR023956">
    <property type="entry name" value="ARD_bac"/>
</dbReference>
<dbReference type="InterPro" id="IPR014710">
    <property type="entry name" value="RmlC-like_jellyroll"/>
</dbReference>
<dbReference type="InterPro" id="IPR011051">
    <property type="entry name" value="RmlC_Cupin_sf"/>
</dbReference>
<dbReference type="PANTHER" id="PTHR23418">
    <property type="entry name" value="ACIREDUCTONE DIOXYGENASE"/>
    <property type="match status" value="1"/>
</dbReference>
<dbReference type="PANTHER" id="PTHR23418:SF0">
    <property type="entry name" value="ACIREDUCTONE DIOXYGENASE"/>
    <property type="match status" value="1"/>
</dbReference>
<dbReference type="Pfam" id="PF03079">
    <property type="entry name" value="ARD"/>
    <property type="match status" value="1"/>
</dbReference>
<dbReference type="SUPFAM" id="SSF51182">
    <property type="entry name" value="RmlC-like cupins"/>
    <property type="match status" value="1"/>
</dbReference>
<evidence type="ECO:0000255" key="1">
    <source>
        <dbReference type="HAMAP-Rule" id="MF_01682"/>
    </source>
</evidence>
<evidence type="ECO:0007829" key="2">
    <source>
        <dbReference type="PDB" id="4QGL"/>
    </source>
</evidence>
<evidence type="ECO:0007829" key="3">
    <source>
        <dbReference type="PDB" id="4QGM"/>
    </source>
</evidence>